<feature type="chain" id="PRO_1000199639" description="Protoheme IX farnesyltransferase">
    <location>
        <begin position="1"/>
        <end position="307"/>
    </location>
</feature>
<feature type="transmembrane region" description="Helical" evidence="1">
    <location>
        <begin position="38"/>
        <end position="58"/>
    </location>
</feature>
<feature type="transmembrane region" description="Helical" evidence="1">
    <location>
        <begin position="65"/>
        <end position="85"/>
    </location>
</feature>
<feature type="transmembrane region" description="Helical" evidence="1">
    <location>
        <begin position="108"/>
        <end position="128"/>
    </location>
</feature>
<feature type="transmembrane region" description="Helical" evidence="1">
    <location>
        <begin position="131"/>
        <end position="151"/>
    </location>
</feature>
<feature type="transmembrane region" description="Helical" evidence="1">
    <location>
        <begin position="158"/>
        <end position="178"/>
    </location>
</feature>
<feature type="transmembrane region" description="Helical" evidence="1">
    <location>
        <begin position="186"/>
        <end position="206"/>
    </location>
</feature>
<feature type="transmembrane region" description="Helical" evidence="1">
    <location>
        <begin position="251"/>
        <end position="271"/>
    </location>
</feature>
<feature type="transmembrane region" description="Helical" evidence="1">
    <location>
        <begin position="287"/>
        <end position="307"/>
    </location>
</feature>
<reference key="1">
    <citation type="submission" date="2009-02" db="EMBL/GenBank/DDBJ databases">
        <title>Genome sequence of Bacillus cereus 03BB102.</title>
        <authorList>
            <person name="Dodson R.J."/>
            <person name="Jackson P."/>
            <person name="Munk A.C."/>
            <person name="Brettin T."/>
            <person name="Bruce D."/>
            <person name="Detter C."/>
            <person name="Tapia R."/>
            <person name="Han C."/>
            <person name="Sutton G."/>
            <person name="Sims D."/>
        </authorList>
    </citation>
    <scope>NUCLEOTIDE SEQUENCE [LARGE SCALE GENOMIC DNA]</scope>
    <source>
        <strain>03BB102</strain>
    </source>
</reference>
<sequence length="307" mass="34531">MNHATSELHDESAVTSIPETTRLQDLKALVKMGIVNSNTLTVFTGFWLALHFNGLSVLDNLDKLFFTIVGSGLVMAGVCCLNNYIDRDIDPLMERTKTRPTVTGKYKPGFALTFGLVILLLGFVFLLLTTPMAVLMGFIGAFTYVVLYSLWTKRKYTLNTVVGSISGAVPPLIGWAAIDPSLGHPIAWMLFLIMFIWQIPHFLALAMKRVDEYRNAGIPMLPVVHGFEITKRQIMIWTVCLLPLPFYMSGLGITFMVIATLLNIGWIVLGFYGFRKKDDIKWSVQMFVYSLNYLTILFVSMIVVTFF</sequence>
<protein>
    <recommendedName>
        <fullName evidence="1">Protoheme IX farnesyltransferase</fullName>
        <ecNumber evidence="1">2.5.1.141</ecNumber>
    </recommendedName>
    <alternativeName>
        <fullName evidence="1">Heme B farnesyltransferase</fullName>
    </alternativeName>
    <alternativeName>
        <fullName evidence="1">Heme O synthase</fullName>
    </alternativeName>
</protein>
<dbReference type="EC" id="2.5.1.141" evidence="1"/>
<dbReference type="EMBL" id="CP001407">
    <property type="protein sequence ID" value="ACO30776.1"/>
    <property type="molecule type" value="Genomic_DNA"/>
</dbReference>
<dbReference type="RefSeq" id="WP_001015051.1">
    <property type="nucleotide sequence ID" value="NZ_CP009318.1"/>
</dbReference>
<dbReference type="SMR" id="C1EPV9"/>
<dbReference type="KEGG" id="bcx:BCA_4050"/>
<dbReference type="PATRIC" id="fig|572264.18.peg.4002"/>
<dbReference type="UniPathway" id="UPA00834">
    <property type="reaction ID" value="UER00712"/>
</dbReference>
<dbReference type="Proteomes" id="UP000002210">
    <property type="component" value="Chromosome"/>
</dbReference>
<dbReference type="GO" id="GO:0005886">
    <property type="term" value="C:plasma membrane"/>
    <property type="evidence" value="ECO:0007669"/>
    <property type="project" value="UniProtKB-SubCell"/>
</dbReference>
<dbReference type="GO" id="GO:0008495">
    <property type="term" value="F:protoheme IX farnesyltransferase activity"/>
    <property type="evidence" value="ECO:0007669"/>
    <property type="project" value="UniProtKB-UniRule"/>
</dbReference>
<dbReference type="GO" id="GO:0048034">
    <property type="term" value="P:heme O biosynthetic process"/>
    <property type="evidence" value="ECO:0007669"/>
    <property type="project" value="UniProtKB-UniRule"/>
</dbReference>
<dbReference type="CDD" id="cd13957">
    <property type="entry name" value="PT_UbiA_Cox10"/>
    <property type="match status" value="1"/>
</dbReference>
<dbReference type="FunFam" id="1.10.357.140:FF:000001">
    <property type="entry name" value="Protoheme IX farnesyltransferase"/>
    <property type="match status" value="1"/>
</dbReference>
<dbReference type="Gene3D" id="1.10.357.140">
    <property type="entry name" value="UbiA prenyltransferase"/>
    <property type="match status" value="1"/>
</dbReference>
<dbReference type="HAMAP" id="MF_00154">
    <property type="entry name" value="CyoE_CtaB"/>
    <property type="match status" value="1"/>
</dbReference>
<dbReference type="InterPro" id="IPR006369">
    <property type="entry name" value="Protohaem_IX_farnesylTrfase"/>
</dbReference>
<dbReference type="InterPro" id="IPR000537">
    <property type="entry name" value="UbiA_prenyltransferase"/>
</dbReference>
<dbReference type="InterPro" id="IPR030470">
    <property type="entry name" value="UbiA_prenylTrfase_CS"/>
</dbReference>
<dbReference type="InterPro" id="IPR044878">
    <property type="entry name" value="UbiA_sf"/>
</dbReference>
<dbReference type="NCBIfam" id="TIGR01473">
    <property type="entry name" value="cyoE_ctaB"/>
    <property type="match status" value="1"/>
</dbReference>
<dbReference type="PANTHER" id="PTHR43448">
    <property type="entry name" value="PROTOHEME IX FARNESYLTRANSFERASE, MITOCHONDRIAL"/>
    <property type="match status" value="1"/>
</dbReference>
<dbReference type="PANTHER" id="PTHR43448:SF2">
    <property type="entry name" value="PROTOHEME IX FARNESYLTRANSFERASE, MITOCHONDRIAL"/>
    <property type="match status" value="1"/>
</dbReference>
<dbReference type="Pfam" id="PF01040">
    <property type="entry name" value="UbiA"/>
    <property type="match status" value="1"/>
</dbReference>
<dbReference type="PROSITE" id="PS00943">
    <property type="entry name" value="UBIA"/>
    <property type="match status" value="1"/>
</dbReference>
<keyword id="KW-1003">Cell membrane</keyword>
<keyword id="KW-0350">Heme biosynthesis</keyword>
<keyword id="KW-0472">Membrane</keyword>
<keyword id="KW-0808">Transferase</keyword>
<keyword id="KW-0812">Transmembrane</keyword>
<keyword id="KW-1133">Transmembrane helix</keyword>
<comment type="function">
    <text evidence="1">Converts heme B (protoheme IX) to heme O by substitution of the vinyl group on carbon 2 of heme B porphyrin ring with a hydroxyethyl farnesyl side group.</text>
</comment>
<comment type="catalytic activity">
    <reaction evidence="1">
        <text>heme b + (2E,6E)-farnesyl diphosphate + H2O = Fe(II)-heme o + diphosphate</text>
        <dbReference type="Rhea" id="RHEA:28070"/>
        <dbReference type="ChEBI" id="CHEBI:15377"/>
        <dbReference type="ChEBI" id="CHEBI:33019"/>
        <dbReference type="ChEBI" id="CHEBI:60344"/>
        <dbReference type="ChEBI" id="CHEBI:60530"/>
        <dbReference type="ChEBI" id="CHEBI:175763"/>
        <dbReference type="EC" id="2.5.1.141"/>
    </reaction>
</comment>
<comment type="pathway">
    <text evidence="1">Porphyrin-containing compound metabolism; heme O biosynthesis; heme O from protoheme: step 1/1.</text>
</comment>
<comment type="subunit">
    <text evidence="1">Interacts with CtaA.</text>
</comment>
<comment type="subcellular location">
    <subcellularLocation>
        <location evidence="1">Cell membrane</location>
        <topology evidence="1">Multi-pass membrane protein</topology>
    </subcellularLocation>
</comment>
<comment type="miscellaneous">
    <text evidence="1">Carbon 2 of the heme B porphyrin ring is defined according to the Fischer nomenclature.</text>
</comment>
<comment type="similarity">
    <text evidence="1">Belongs to the UbiA prenyltransferase family. Protoheme IX farnesyltransferase subfamily.</text>
</comment>
<name>COXX_BACC3</name>
<gene>
    <name evidence="1" type="primary">ctaB</name>
    <name type="ordered locus">BCA_4050</name>
</gene>
<proteinExistence type="inferred from homology"/>
<accession>C1EPV9</accession>
<evidence type="ECO:0000255" key="1">
    <source>
        <dbReference type="HAMAP-Rule" id="MF_00154"/>
    </source>
</evidence>
<organism>
    <name type="scientific">Bacillus cereus (strain 03BB102)</name>
    <dbReference type="NCBI Taxonomy" id="572264"/>
    <lineage>
        <taxon>Bacteria</taxon>
        <taxon>Bacillati</taxon>
        <taxon>Bacillota</taxon>
        <taxon>Bacilli</taxon>
        <taxon>Bacillales</taxon>
        <taxon>Bacillaceae</taxon>
        <taxon>Bacillus</taxon>
        <taxon>Bacillus cereus group</taxon>
    </lineage>
</organism>